<feature type="chain" id="PRO_0000284279" description="Endoribonuclease YbeY">
    <location>
        <begin position="1"/>
        <end position="166"/>
    </location>
</feature>
<feature type="region of interest" description="Disordered" evidence="2">
    <location>
        <begin position="141"/>
        <end position="166"/>
    </location>
</feature>
<feature type="compositionally biased region" description="Basic and acidic residues" evidence="2">
    <location>
        <begin position="153"/>
        <end position="166"/>
    </location>
</feature>
<feature type="binding site" evidence="1">
    <location>
        <position position="111"/>
    </location>
    <ligand>
        <name>Zn(2+)</name>
        <dbReference type="ChEBI" id="CHEBI:29105"/>
        <note>catalytic</note>
    </ligand>
</feature>
<feature type="binding site" evidence="1">
    <location>
        <position position="115"/>
    </location>
    <ligand>
        <name>Zn(2+)</name>
        <dbReference type="ChEBI" id="CHEBI:29105"/>
        <note>catalytic</note>
    </ligand>
</feature>
<feature type="binding site" evidence="1">
    <location>
        <position position="121"/>
    </location>
    <ligand>
        <name>Zn(2+)</name>
        <dbReference type="ChEBI" id="CHEBI:29105"/>
        <note>catalytic</note>
    </ligand>
</feature>
<comment type="function">
    <text evidence="1">Single strand-specific metallo-endoribonuclease involved in late-stage 70S ribosome quality control and in maturation of the 3' terminus of the 16S rRNA.</text>
</comment>
<comment type="cofactor">
    <cofactor evidence="1">
        <name>Zn(2+)</name>
        <dbReference type="ChEBI" id="CHEBI:29105"/>
    </cofactor>
    <text evidence="1">Binds 1 zinc ion.</text>
</comment>
<comment type="subcellular location">
    <subcellularLocation>
        <location evidence="1">Cytoplasm</location>
    </subcellularLocation>
</comment>
<comment type="similarity">
    <text evidence="1">Belongs to the endoribonuclease YbeY family.</text>
</comment>
<reference key="1">
    <citation type="journal article" date="2005" name="J. Bacteriol.">
        <title>Whole-genome sequence analysis of Pseudomonas syringae pv. phaseolicola 1448A reveals divergence among pathovars in genes involved in virulence and transposition.</title>
        <authorList>
            <person name="Joardar V."/>
            <person name="Lindeberg M."/>
            <person name="Jackson R.W."/>
            <person name="Selengut J."/>
            <person name="Dodson R."/>
            <person name="Brinkac L.M."/>
            <person name="Daugherty S.C."/>
            <person name="DeBoy R.T."/>
            <person name="Durkin A.S."/>
            <person name="Gwinn Giglio M."/>
            <person name="Madupu R."/>
            <person name="Nelson W.C."/>
            <person name="Rosovitz M.J."/>
            <person name="Sullivan S.A."/>
            <person name="Crabtree J."/>
            <person name="Creasy T."/>
            <person name="Davidsen T.M."/>
            <person name="Haft D.H."/>
            <person name="Zafar N."/>
            <person name="Zhou L."/>
            <person name="Halpin R."/>
            <person name="Holley T."/>
            <person name="Khouri H.M."/>
            <person name="Feldblyum T.V."/>
            <person name="White O."/>
            <person name="Fraser C.M."/>
            <person name="Chatterjee A.K."/>
            <person name="Cartinhour S."/>
            <person name="Schneider D."/>
            <person name="Mansfield J.W."/>
            <person name="Collmer A."/>
            <person name="Buell R."/>
        </authorList>
    </citation>
    <scope>NUCLEOTIDE SEQUENCE [LARGE SCALE GENOMIC DNA]</scope>
    <source>
        <strain>1448A / Race 6</strain>
    </source>
</reference>
<organism>
    <name type="scientific">Pseudomonas savastanoi pv. phaseolicola (strain 1448A / Race 6)</name>
    <name type="common">Pseudomonas syringae pv. phaseolicola (strain 1448A / Race 6)</name>
    <dbReference type="NCBI Taxonomy" id="264730"/>
    <lineage>
        <taxon>Bacteria</taxon>
        <taxon>Pseudomonadati</taxon>
        <taxon>Pseudomonadota</taxon>
        <taxon>Gammaproteobacteria</taxon>
        <taxon>Pseudomonadales</taxon>
        <taxon>Pseudomonadaceae</taxon>
        <taxon>Pseudomonas</taxon>
    </lineage>
</organism>
<protein>
    <recommendedName>
        <fullName evidence="1">Endoribonuclease YbeY</fullName>
        <ecNumber evidence="1">3.1.-.-</ecNumber>
    </recommendedName>
</protein>
<evidence type="ECO:0000255" key="1">
    <source>
        <dbReference type="HAMAP-Rule" id="MF_00009"/>
    </source>
</evidence>
<evidence type="ECO:0000256" key="2">
    <source>
        <dbReference type="SAM" id="MobiDB-lite"/>
    </source>
</evidence>
<name>YBEY_PSE14</name>
<keyword id="KW-0963">Cytoplasm</keyword>
<keyword id="KW-0255">Endonuclease</keyword>
<keyword id="KW-0378">Hydrolase</keyword>
<keyword id="KW-0479">Metal-binding</keyword>
<keyword id="KW-0540">Nuclease</keyword>
<keyword id="KW-0690">Ribosome biogenesis</keyword>
<keyword id="KW-0698">rRNA processing</keyword>
<keyword id="KW-0862">Zinc</keyword>
<accession>Q48DN6</accession>
<dbReference type="EC" id="3.1.-.-" evidence="1"/>
<dbReference type="EMBL" id="CP000058">
    <property type="protein sequence ID" value="AAZ33278.1"/>
    <property type="molecule type" value="Genomic_DNA"/>
</dbReference>
<dbReference type="RefSeq" id="WP_004655632.1">
    <property type="nucleotide sequence ID" value="NC_005773.3"/>
</dbReference>
<dbReference type="SMR" id="Q48DN6"/>
<dbReference type="KEGG" id="psp:PSPPH_4389"/>
<dbReference type="eggNOG" id="COG0319">
    <property type="taxonomic scope" value="Bacteria"/>
</dbReference>
<dbReference type="HOGENOM" id="CLU_106710_0_1_6"/>
<dbReference type="Proteomes" id="UP000000551">
    <property type="component" value="Chromosome"/>
</dbReference>
<dbReference type="GO" id="GO:0005737">
    <property type="term" value="C:cytoplasm"/>
    <property type="evidence" value="ECO:0007669"/>
    <property type="project" value="UniProtKB-SubCell"/>
</dbReference>
<dbReference type="GO" id="GO:0004222">
    <property type="term" value="F:metalloendopeptidase activity"/>
    <property type="evidence" value="ECO:0007669"/>
    <property type="project" value="InterPro"/>
</dbReference>
<dbReference type="GO" id="GO:0004521">
    <property type="term" value="F:RNA endonuclease activity"/>
    <property type="evidence" value="ECO:0007669"/>
    <property type="project" value="UniProtKB-UniRule"/>
</dbReference>
<dbReference type="GO" id="GO:0008270">
    <property type="term" value="F:zinc ion binding"/>
    <property type="evidence" value="ECO:0007669"/>
    <property type="project" value="UniProtKB-UniRule"/>
</dbReference>
<dbReference type="GO" id="GO:0006364">
    <property type="term" value="P:rRNA processing"/>
    <property type="evidence" value="ECO:0007669"/>
    <property type="project" value="UniProtKB-UniRule"/>
</dbReference>
<dbReference type="Gene3D" id="3.40.390.30">
    <property type="entry name" value="Metalloproteases ('zincins'), catalytic domain"/>
    <property type="match status" value="1"/>
</dbReference>
<dbReference type="HAMAP" id="MF_00009">
    <property type="entry name" value="Endoribonucl_YbeY"/>
    <property type="match status" value="1"/>
</dbReference>
<dbReference type="InterPro" id="IPR023091">
    <property type="entry name" value="MetalPrtase_cat_dom_sf_prd"/>
</dbReference>
<dbReference type="InterPro" id="IPR002036">
    <property type="entry name" value="YbeY"/>
</dbReference>
<dbReference type="InterPro" id="IPR020549">
    <property type="entry name" value="YbeY_CS"/>
</dbReference>
<dbReference type="NCBIfam" id="TIGR00043">
    <property type="entry name" value="rRNA maturation RNase YbeY"/>
    <property type="match status" value="1"/>
</dbReference>
<dbReference type="PANTHER" id="PTHR46986">
    <property type="entry name" value="ENDORIBONUCLEASE YBEY, CHLOROPLASTIC"/>
    <property type="match status" value="1"/>
</dbReference>
<dbReference type="PANTHER" id="PTHR46986:SF1">
    <property type="entry name" value="ENDORIBONUCLEASE YBEY, CHLOROPLASTIC"/>
    <property type="match status" value="1"/>
</dbReference>
<dbReference type="Pfam" id="PF02130">
    <property type="entry name" value="YbeY"/>
    <property type="match status" value="1"/>
</dbReference>
<dbReference type="SUPFAM" id="SSF55486">
    <property type="entry name" value="Metalloproteases ('zincins'), catalytic domain"/>
    <property type="match status" value="1"/>
</dbReference>
<dbReference type="PROSITE" id="PS01306">
    <property type="entry name" value="UPF0054"/>
    <property type="match status" value="1"/>
</dbReference>
<sequence>MLELDLQIASETSAPDEARFRLWCEMGLRQRSADSELTIRLVDENEGRELNHTWRHKNYATNVLSFPADAPDDMLDIPLLGDLVICVPVVNREAAEQGKSVDAHWAHMVIHGCLHLLGYDHIDDEEAEEMEALERTLLEELGYPDPYAEDESADHPHSDTPSKDHE</sequence>
<gene>
    <name evidence="1" type="primary">ybeY</name>
    <name type="ordered locus">PSPPH_4389</name>
</gene>
<proteinExistence type="inferred from homology"/>